<reference key="1">
    <citation type="journal article" date="2002" name="Biochem. Genet.">
        <title>Evolutionary relationships of flying foxes (Genus Pteropus) in the Philippines inferred from DNA sequences of cytochrome b gene.</title>
        <authorList>
            <person name="Bastian S.T. Jr."/>
            <person name="Tanaka K."/>
            <person name="Anunciado R.V.P."/>
            <person name="Natural N.G."/>
            <person name="Sumalde A.C."/>
            <person name="Namikawa T."/>
        </authorList>
    </citation>
    <scope>NUCLEOTIDE SEQUENCE [GENOMIC DNA]</scope>
</reference>
<comment type="function">
    <text evidence="2">Component of the ubiquinol-cytochrome c reductase complex (complex III or cytochrome b-c1 complex) that is part of the mitochondrial respiratory chain. The b-c1 complex mediates electron transfer from ubiquinol to cytochrome c. Contributes to the generation of a proton gradient across the mitochondrial membrane that is then used for ATP synthesis.</text>
</comment>
<comment type="cofactor">
    <cofactor evidence="2">
        <name>heme b</name>
        <dbReference type="ChEBI" id="CHEBI:60344"/>
    </cofactor>
    <text evidence="2">Binds 2 heme b groups non-covalently.</text>
</comment>
<comment type="subunit">
    <text evidence="2">The cytochrome bc1 complex contains 11 subunits: 3 respiratory subunits (MT-CYB, CYC1 and UQCRFS1), 2 core proteins (UQCRC1 and UQCRC2) and 6 low-molecular weight proteins (UQCRH/QCR6, UQCRB/QCR7, UQCRQ/QCR8, UQCR10/QCR9, UQCR11/QCR10 and a cleavage product of UQCRFS1). This cytochrome bc1 complex then forms a dimer.</text>
</comment>
<comment type="subcellular location">
    <subcellularLocation>
        <location evidence="2">Mitochondrion inner membrane</location>
        <topology evidence="2">Multi-pass membrane protein</topology>
    </subcellularLocation>
</comment>
<comment type="miscellaneous">
    <text evidence="1">Heme 1 (or BL or b562) is low-potential and absorbs at about 562 nm, and heme 2 (or BH or b566) is high-potential and absorbs at about 566 nm.</text>
</comment>
<comment type="similarity">
    <text evidence="3 4">Belongs to the cytochrome b family.</text>
</comment>
<comment type="caution">
    <text evidence="2">The full-length protein contains only eight transmembrane helices, not nine as predicted by bioinformatics tools.</text>
</comment>
<proteinExistence type="inferred from homology"/>
<sequence length="379" mass="42818">MTNIRKSHPLFQNLNDSLIDLPAPSSISSWWNFGSLLGICLAIQILTGLFLAMHYTSDTTTAFQSVTHICRDVNYGWILRYLHANGASMFFICLFLHVGRGLYYGSYIYKETWNVGVILLFAVMATAFMGYVLPWGQMSFWGATVITNLLSAIPYIGTNLVKWIWGGFSVDKATLTRFFAFHFVLPFIISALFLVHLLFLHETGWNNPTGIPSDSDMIPFDPYYTIKDMLGALAMVLALLMVVLFSPDVLGDPDNYIPANPLNTPPHIKPEWYFLFAYAILRSIPNKLGGVLALVLSILILILMPLLHTSKQRSMMFRPLSQCMFWLLVADLLTLTWIGGQPVEHPFIIIGQLASILYFLLILVLMPITSIVENHLLKW</sequence>
<keyword id="KW-0249">Electron transport</keyword>
<keyword id="KW-0349">Heme</keyword>
<keyword id="KW-0408">Iron</keyword>
<keyword id="KW-0472">Membrane</keyword>
<keyword id="KW-0479">Metal-binding</keyword>
<keyword id="KW-0496">Mitochondrion</keyword>
<keyword id="KW-0999">Mitochondrion inner membrane</keyword>
<keyword id="KW-0679">Respiratory chain</keyword>
<keyword id="KW-0812">Transmembrane</keyword>
<keyword id="KW-1133">Transmembrane helix</keyword>
<keyword id="KW-0813">Transport</keyword>
<keyword id="KW-0830">Ubiquinone</keyword>
<feature type="chain" id="PRO_0000254854" description="Cytochrome b">
    <location>
        <begin position="1"/>
        <end position="379"/>
    </location>
</feature>
<feature type="transmembrane region" description="Helical" evidence="2">
    <location>
        <begin position="33"/>
        <end position="53"/>
    </location>
</feature>
<feature type="transmembrane region" description="Helical" evidence="2">
    <location>
        <begin position="77"/>
        <end position="98"/>
    </location>
</feature>
<feature type="transmembrane region" description="Helical" evidence="2">
    <location>
        <begin position="113"/>
        <end position="133"/>
    </location>
</feature>
<feature type="transmembrane region" description="Helical" evidence="2">
    <location>
        <begin position="178"/>
        <end position="198"/>
    </location>
</feature>
<feature type="transmembrane region" description="Helical" evidence="2">
    <location>
        <begin position="226"/>
        <end position="246"/>
    </location>
</feature>
<feature type="transmembrane region" description="Helical" evidence="2">
    <location>
        <begin position="288"/>
        <end position="308"/>
    </location>
</feature>
<feature type="transmembrane region" description="Helical" evidence="2">
    <location>
        <begin position="320"/>
        <end position="340"/>
    </location>
</feature>
<feature type="transmembrane region" description="Helical" evidence="2">
    <location>
        <begin position="347"/>
        <end position="367"/>
    </location>
</feature>
<feature type="binding site" description="axial binding residue" evidence="2">
    <location>
        <position position="83"/>
    </location>
    <ligand>
        <name>heme b</name>
        <dbReference type="ChEBI" id="CHEBI:60344"/>
        <label>b562</label>
    </ligand>
    <ligandPart>
        <name>Fe</name>
        <dbReference type="ChEBI" id="CHEBI:18248"/>
    </ligandPart>
</feature>
<feature type="binding site" description="axial binding residue" evidence="2">
    <location>
        <position position="97"/>
    </location>
    <ligand>
        <name>heme b</name>
        <dbReference type="ChEBI" id="CHEBI:60344"/>
        <label>b566</label>
    </ligand>
    <ligandPart>
        <name>Fe</name>
        <dbReference type="ChEBI" id="CHEBI:18248"/>
    </ligandPart>
</feature>
<feature type="binding site" description="axial binding residue" evidence="2">
    <location>
        <position position="182"/>
    </location>
    <ligand>
        <name>heme b</name>
        <dbReference type="ChEBI" id="CHEBI:60344"/>
        <label>b562</label>
    </ligand>
    <ligandPart>
        <name>Fe</name>
        <dbReference type="ChEBI" id="CHEBI:18248"/>
    </ligandPart>
</feature>
<feature type="binding site" description="axial binding residue" evidence="2">
    <location>
        <position position="196"/>
    </location>
    <ligand>
        <name>heme b</name>
        <dbReference type="ChEBI" id="CHEBI:60344"/>
        <label>b566</label>
    </ligand>
    <ligandPart>
        <name>Fe</name>
        <dbReference type="ChEBI" id="CHEBI:18248"/>
    </ligandPart>
</feature>
<feature type="binding site" evidence="2">
    <location>
        <position position="201"/>
    </location>
    <ligand>
        <name>a ubiquinone</name>
        <dbReference type="ChEBI" id="CHEBI:16389"/>
    </ligand>
</feature>
<evidence type="ECO:0000250" key="1"/>
<evidence type="ECO:0000250" key="2">
    <source>
        <dbReference type="UniProtKB" id="P00157"/>
    </source>
</evidence>
<evidence type="ECO:0000255" key="3">
    <source>
        <dbReference type="PROSITE-ProRule" id="PRU00967"/>
    </source>
</evidence>
<evidence type="ECO:0000255" key="4">
    <source>
        <dbReference type="PROSITE-ProRule" id="PRU00968"/>
    </source>
</evidence>
<organism>
    <name type="scientific">Pteropus speciosus</name>
    <name type="common">Philippine gray flying fox</name>
    <dbReference type="NCBI Taxonomy" id="161599"/>
    <lineage>
        <taxon>Eukaryota</taxon>
        <taxon>Metazoa</taxon>
        <taxon>Chordata</taxon>
        <taxon>Craniata</taxon>
        <taxon>Vertebrata</taxon>
        <taxon>Euteleostomi</taxon>
        <taxon>Mammalia</taxon>
        <taxon>Eutheria</taxon>
        <taxon>Laurasiatheria</taxon>
        <taxon>Chiroptera</taxon>
        <taxon>Yinpterochiroptera</taxon>
        <taxon>Pteropodoidea</taxon>
        <taxon>Pteropodidae</taxon>
        <taxon>Pteropodinae</taxon>
        <taxon>Pteropus</taxon>
    </lineage>
</organism>
<dbReference type="EMBL" id="AB062474">
    <property type="protein sequence ID" value="BAB86372.1"/>
    <property type="molecule type" value="Genomic_DNA"/>
</dbReference>
<dbReference type="SMR" id="Q8SJZ2"/>
<dbReference type="GO" id="GO:0005743">
    <property type="term" value="C:mitochondrial inner membrane"/>
    <property type="evidence" value="ECO:0007669"/>
    <property type="project" value="UniProtKB-SubCell"/>
</dbReference>
<dbReference type="GO" id="GO:0045275">
    <property type="term" value="C:respiratory chain complex III"/>
    <property type="evidence" value="ECO:0007669"/>
    <property type="project" value="InterPro"/>
</dbReference>
<dbReference type="GO" id="GO:0046872">
    <property type="term" value="F:metal ion binding"/>
    <property type="evidence" value="ECO:0007669"/>
    <property type="project" value="UniProtKB-KW"/>
</dbReference>
<dbReference type="GO" id="GO:0008121">
    <property type="term" value="F:ubiquinol-cytochrome-c reductase activity"/>
    <property type="evidence" value="ECO:0007669"/>
    <property type="project" value="InterPro"/>
</dbReference>
<dbReference type="GO" id="GO:0006122">
    <property type="term" value="P:mitochondrial electron transport, ubiquinol to cytochrome c"/>
    <property type="evidence" value="ECO:0007669"/>
    <property type="project" value="TreeGrafter"/>
</dbReference>
<dbReference type="CDD" id="cd00290">
    <property type="entry name" value="cytochrome_b_C"/>
    <property type="match status" value="1"/>
</dbReference>
<dbReference type="CDD" id="cd00284">
    <property type="entry name" value="Cytochrome_b_N"/>
    <property type="match status" value="1"/>
</dbReference>
<dbReference type="FunFam" id="1.20.810.10:FF:000002">
    <property type="entry name" value="Cytochrome b"/>
    <property type="match status" value="1"/>
</dbReference>
<dbReference type="Gene3D" id="1.20.810.10">
    <property type="entry name" value="Cytochrome Bc1 Complex, Chain C"/>
    <property type="match status" value="1"/>
</dbReference>
<dbReference type="InterPro" id="IPR005798">
    <property type="entry name" value="Cyt_b/b6_C"/>
</dbReference>
<dbReference type="InterPro" id="IPR036150">
    <property type="entry name" value="Cyt_b/b6_C_sf"/>
</dbReference>
<dbReference type="InterPro" id="IPR005797">
    <property type="entry name" value="Cyt_b/b6_N"/>
</dbReference>
<dbReference type="InterPro" id="IPR027387">
    <property type="entry name" value="Cytb/b6-like_sf"/>
</dbReference>
<dbReference type="InterPro" id="IPR030689">
    <property type="entry name" value="Cytochrome_b"/>
</dbReference>
<dbReference type="InterPro" id="IPR048260">
    <property type="entry name" value="Cytochrome_b_C_euk/bac"/>
</dbReference>
<dbReference type="InterPro" id="IPR048259">
    <property type="entry name" value="Cytochrome_b_N_euk/bac"/>
</dbReference>
<dbReference type="InterPro" id="IPR016174">
    <property type="entry name" value="Di-haem_cyt_TM"/>
</dbReference>
<dbReference type="PANTHER" id="PTHR19271">
    <property type="entry name" value="CYTOCHROME B"/>
    <property type="match status" value="1"/>
</dbReference>
<dbReference type="PANTHER" id="PTHR19271:SF16">
    <property type="entry name" value="CYTOCHROME B"/>
    <property type="match status" value="1"/>
</dbReference>
<dbReference type="Pfam" id="PF00032">
    <property type="entry name" value="Cytochrom_B_C"/>
    <property type="match status" value="1"/>
</dbReference>
<dbReference type="Pfam" id="PF00033">
    <property type="entry name" value="Cytochrome_B"/>
    <property type="match status" value="1"/>
</dbReference>
<dbReference type="PIRSF" id="PIRSF038885">
    <property type="entry name" value="COB"/>
    <property type="match status" value="1"/>
</dbReference>
<dbReference type="SUPFAM" id="SSF81648">
    <property type="entry name" value="a domain/subunit of cytochrome bc1 complex (Ubiquinol-cytochrome c reductase)"/>
    <property type="match status" value="1"/>
</dbReference>
<dbReference type="SUPFAM" id="SSF81342">
    <property type="entry name" value="Transmembrane di-heme cytochromes"/>
    <property type="match status" value="1"/>
</dbReference>
<dbReference type="PROSITE" id="PS51003">
    <property type="entry name" value="CYTB_CTER"/>
    <property type="match status" value="1"/>
</dbReference>
<dbReference type="PROSITE" id="PS51002">
    <property type="entry name" value="CYTB_NTER"/>
    <property type="match status" value="1"/>
</dbReference>
<accession>Q8SJZ2</accession>
<geneLocation type="mitochondrion"/>
<protein>
    <recommendedName>
        <fullName>Cytochrome b</fullName>
    </recommendedName>
    <alternativeName>
        <fullName>Complex III subunit 3</fullName>
    </alternativeName>
    <alternativeName>
        <fullName>Complex III subunit III</fullName>
    </alternativeName>
    <alternativeName>
        <fullName>Cytochrome b-c1 complex subunit 3</fullName>
    </alternativeName>
    <alternativeName>
        <fullName>Ubiquinol-cytochrome-c reductase complex cytochrome b subunit</fullName>
    </alternativeName>
</protein>
<name>CYB_PTESP</name>
<gene>
    <name type="primary">MT-CYB</name>
    <name type="synonym">COB</name>
    <name type="synonym">CYTB</name>
    <name type="synonym">MTCYB</name>
</gene>